<keyword id="KW-0002">3D-structure</keyword>
<keyword id="KW-0963">Cytoplasm</keyword>
<keyword id="KW-1185">Reference proteome</keyword>
<keyword id="KW-0687">Ribonucleoprotein</keyword>
<keyword id="KW-0689">Ribosomal protein</keyword>
<reference key="1">
    <citation type="journal article" date="2011" name="Nature">
        <title>A high-resolution map of human evolutionary constraint using 29 mammals.</title>
        <authorList>
            <person name="Lindblad-Toh K."/>
            <person name="Garber M."/>
            <person name="Zuk O."/>
            <person name="Lin M.F."/>
            <person name="Parker B.J."/>
            <person name="Washietl S."/>
            <person name="Kheradpour P."/>
            <person name="Ernst J."/>
            <person name="Jordan G."/>
            <person name="Mauceli E."/>
            <person name="Ward L.D."/>
            <person name="Lowe C.B."/>
            <person name="Holloway A.K."/>
            <person name="Clamp M."/>
            <person name="Gnerre S."/>
            <person name="Alfoldi J."/>
            <person name="Beal K."/>
            <person name="Chang J."/>
            <person name="Clawson H."/>
            <person name="Cuff J."/>
            <person name="Di Palma F."/>
            <person name="Fitzgerald S."/>
            <person name="Flicek P."/>
            <person name="Guttman M."/>
            <person name="Hubisz M.J."/>
            <person name="Jaffe D.B."/>
            <person name="Jungreis I."/>
            <person name="Kent W.J."/>
            <person name="Kostka D."/>
            <person name="Lara M."/>
            <person name="Martins A.L."/>
            <person name="Massingham T."/>
            <person name="Moltke I."/>
            <person name="Raney B.J."/>
            <person name="Rasmussen M.D."/>
            <person name="Robinson J."/>
            <person name="Stark A."/>
            <person name="Vilella A.J."/>
            <person name="Wen J."/>
            <person name="Xie X."/>
            <person name="Zody M.C."/>
            <person name="Baldwin J."/>
            <person name="Bloom T."/>
            <person name="Chin C.W."/>
            <person name="Heiman D."/>
            <person name="Nicol R."/>
            <person name="Nusbaum C."/>
            <person name="Young S."/>
            <person name="Wilkinson J."/>
            <person name="Worley K.C."/>
            <person name="Kovar C.L."/>
            <person name="Muzny D.M."/>
            <person name="Gibbs R.A."/>
            <person name="Cree A."/>
            <person name="Dihn H.H."/>
            <person name="Fowler G."/>
            <person name="Jhangiani S."/>
            <person name="Joshi V."/>
            <person name="Lee S."/>
            <person name="Lewis L.R."/>
            <person name="Nazareth L.V."/>
            <person name="Okwuonu G."/>
            <person name="Santibanez J."/>
            <person name="Warren W.C."/>
            <person name="Mardis E.R."/>
            <person name="Weinstock G.M."/>
            <person name="Wilson R.K."/>
            <person name="Delehaunty K."/>
            <person name="Dooling D."/>
            <person name="Fronik C."/>
            <person name="Fulton L."/>
            <person name="Fulton B."/>
            <person name="Graves T."/>
            <person name="Minx P."/>
            <person name="Sodergren E."/>
            <person name="Birney E."/>
            <person name="Margulies E.H."/>
            <person name="Herrero J."/>
            <person name="Green E.D."/>
            <person name="Haussler D."/>
            <person name="Siepel A."/>
            <person name="Goldman N."/>
            <person name="Pollard K.S."/>
            <person name="Pedersen J.S."/>
            <person name="Lander E.S."/>
            <person name="Kellis M."/>
        </authorList>
    </citation>
    <scope>NUCLEOTIDE SEQUENCE [LARGE SCALE GENOMIC DNA]</scope>
    <source>
        <strain>Thorbecke</strain>
    </source>
</reference>
<reference evidence="14 15" key="2">
    <citation type="journal article" date="2016" name="Cell">
        <title>Decoding mammalian ribosome-mRNA states by translational GTPase complexes.</title>
        <authorList>
            <person name="Shao S."/>
            <person name="Murray J."/>
            <person name="Brown A."/>
            <person name="Taunton J."/>
            <person name="Ramakrishnan V."/>
            <person name="Hegde R.S."/>
        </authorList>
    </citation>
    <scope>STRUCTURE BY ELECTRON MICROSCOPY (3.31 ANGSTROMS) OF RIBOSOME</scope>
    <scope>FUNCTION</scope>
    <scope>SUBCELLULAR LOCATION</scope>
    <scope>SUBUNIT</scope>
</reference>
<reference evidence="16 17" key="3">
    <citation type="journal article" date="2018" name="Elife">
        <title>Dual tRNA mimicry in the Cricket paralysis virus IRES uncovers an unexpected similarity with the Hepatitis C Virus IRES.</title>
        <authorList>
            <person name="Pisareva V.P."/>
            <person name="Pisarev A.V."/>
            <person name="Fernandez I.S."/>
        </authorList>
    </citation>
    <scope>STRUCTURE BY ELECTRON MICROSCOPY (3.20 ANGSTROMS) OF RIBOSOME</scope>
    <scope>SUBCELLULAR LOCATION</scope>
    <scope>SUBUNIT</scope>
</reference>
<reference evidence="20 21" key="4">
    <citation type="journal article" date="2018" name="Elife">
        <title>Structures of translationally inactive mammalian ribosomes.</title>
        <authorList>
            <person name="Brown A."/>
            <person name="Baird M.R."/>
            <person name="Yip M.C."/>
            <person name="Murray J."/>
            <person name="Shao S."/>
        </authorList>
    </citation>
    <scope>STRUCTURE BY ELECTRON MICROSCOPY (3.30 ANGSTROMS) OF 2-154 OF RIBOSOME</scope>
    <scope>SUBCELLULAR LOCATION</scope>
    <scope>SUBUNIT</scope>
</reference>
<reference evidence="18 19" key="5">
    <citation type="journal article" date="2018" name="Mol. Cell">
        <title>ZNF598 is a quality control sensor of collided ribosomes.</title>
        <authorList>
            <person name="Juszkiewicz S."/>
            <person name="Chandrasekaran V."/>
            <person name="Lin Z."/>
            <person name="Kraatz S."/>
            <person name="Ramakrishnan V."/>
            <person name="Hegde R.S."/>
        </authorList>
    </citation>
    <scope>STRUCTURE BY ELECTRON MICROSCOPY (3.80 ANGSTROMS) OF RIBOSOME</scope>
    <scope>SUBCELLULAR LOCATION</scope>
    <scope>SUBUNIT</scope>
</reference>
<reference evidence="24 25" key="6">
    <citation type="journal article" date="2019" name="Elife">
        <title>Structural and mutational analysis of the ribosome-arresting human XBP1u.</title>
        <authorList>
            <person name="Shanmuganathan V."/>
            <person name="Schiller N."/>
            <person name="Magoulopoulou A."/>
            <person name="Cheng J."/>
            <person name="Braunger K."/>
            <person name="Cymer F."/>
            <person name="Berninghausen O."/>
            <person name="Beatrix B."/>
            <person name="Kohno K."/>
            <person name="von Heijne G."/>
            <person name="Beckmann R."/>
        </authorList>
    </citation>
    <scope>STRUCTURE BY ELECTRON MICROSCOPY (3.00 ANGSTROMS) OF 2-154 OF 21-233 OF RIBOSOME</scope>
    <scope>SUBCELLULAR LOCATION</scope>
    <scope>SUBUNIT</scope>
</reference>
<reference evidence="22 23" key="7">
    <citation type="journal article" date="2019" name="EMBO J.">
        <title>The Israeli acute paralysis virus IRES captures host ribosomes by mimicking a ribosomal state with hybrid tRNAs.</title>
        <authorList>
            <person name="Acosta-Reyes F."/>
            <person name="Neupane R."/>
            <person name="Frank J."/>
            <person name="Fernandez I.S."/>
        </authorList>
    </citation>
    <scope>STRUCTURE BY ELECTRON MICROSCOPY (3.10 ANGSTROMS) OF RIBOSOME</scope>
    <scope>SUBCELLULAR LOCATION</scope>
    <scope>SUBUNIT</scope>
</reference>
<reference evidence="26" key="8">
    <citation type="journal article" date="2019" name="Nat. Struct. Mol. Biol.">
        <title>Mechanism of ribosome stalling during translation of a poly(A) tail.</title>
        <authorList>
            <person name="Chandrasekaran V."/>
            <person name="Juszkiewicz S."/>
            <person name="Choi J."/>
            <person name="Puglisi J.D."/>
            <person name="Brown A."/>
            <person name="Shao S."/>
            <person name="Ramakrishnan V."/>
            <person name="Hegde R.S."/>
        </authorList>
    </citation>
    <scope>STRUCTURE BY ELECTRON MICROSCOPY (2.80 ANGSTROMS) OF RIBOSOME</scope>
    <scope>SUBCELLULAR LOCATION</scope>
    <scope>SUBUNIT</scope>
</reference>
<reference evidence="27 28" key="9">
    <citation type="journal article" date="2020" name="Cell Rep.">
        <title>The Halastavi arva virus intergenic region IRES promotes translation by the simplest possible initiation mechanism.</title>
        <authorList>
            <person name="Abaeva I.S."/>
            <person name="Vicens Q."/>
            <person name="Bochler A."/>
            <person name="Soufari H."/>
            <person name="Simonetti A."/>
            <person name="Pestova T.V."/>
            <person name="Hashem Y."/>
            <person name="Hellen C.U.T."/>
        </authorList>
    </citation>
    <scope>STRUCTURE BY ELECTRON MICROSCOPY (3.49 ANGSTROMS) OF 2-160 OF RIBOSOME</scope>
    <scope>SUBCELLULAR LOCATION</scope>
    <scope>SUBUNIT</scope>
</reference>
<reference evidence="30 31" key="10">
    <citation type="journal article" date="2022" name="Mol. Cell">
        <title>Direct epitranscriptomic regulation of mammalian translation initiation through N4-acetylcytidine.</title>
        <authorList>
            <person name="Arango D."/>
            <person name="Sturgill D."/>
            <person name="Yang R."/>
            <person name="Kanai T."/>
            <person name="Bauer P."/>
            <person name="Roy J."/>
            <person name="Wang Z."/>
            <person name="Hosogane M."/>
            <person name="Schiffers S."/>
            <person name="Oberdoerffer S."/>
        </authorList>
    </citation>
    <scope>STRUCTURE BY ELECTRON MICROSCOPY (2.80 ANGSTROMS) OF 2-154 OF RIBOSOME</scope>
    <scope>SUBCELLULAR LOCATION</scope>
    <scope>SUBUNIT</scope>
</reference>
<reference evidence="29" key="11">
    <citation type="journal article" date="2023" name="Nature">
        <title>A molecular network of conserved factors keeps ribosomes dormant in the egg.</title>
        <authorList>
            <person name="Leesch F."/>
            <person name="Lorenzo-Orts L."/>
            <person name="Pribitzer C."/>
            <person name="Grishkovskaya I."/>
            <person name="Roehsner J."/>
            <person name="Chugunova A."/>
            <person name="Matzinger M."/>
            <person name="Roitinger E."/>
            <person name="Belacic K."/>
            <person name="Kandolf S."/>
            <person name="Lin T.Y."/>
            <person name="Mechtler K."/>
            <person name="Meinhart A."/>
            <person name="Haselbach D."/>
            <person name="Pauli A."/>
        </authorList>
    </citation>
    <scope>STRUCTURE BY ELECTRON MICROSCOPY (2.30 ANGSTROMS) OF RIBOSOME</scope>
    <scope>SUBCELLULAR LOCATION</scope>
    <scope>SUBUNIT</scope>
</reference>
<feature type="initiator methionine" description="Removed" evidence="1">
    <location>
        <position position="1"/>
    </location>
</feature>
<feature type="chain" id="PRO_0000460105" description="Large ribosomal subunit protein uL22">
    <location>
        <begin position="2"/>
        <end position="184"/>
    </location>
</feature>
<feature type="region of interest" description="Disordered" evidence="2">
    <location>
        <begin position="160"/>
        <end position="184"/>
    </location>
</feature>
<feature type="compositionally biased region" description="Basic residues" evidence="2">
    <location>
        <begin position="167"/>
        <end position="184"/>
    </location>
</feature>
<accession>G1SCJ6</accession>
<accession>G1TVT6</accession>
<sequence>MVRYSLDPENPTKSCKSRGSNLRVHFKNTRETAQAIKGMHIRKATKYLKDVTLKKQCVPFRRYNGGVGRCAQAKQWGWTQGRWPKKSAEFLLHMLKNAESNAELKGLDVDSLVIEHIQVNKAPKMRRRTYRAHGRINPYMSSPCHIEMILTEKEQIVPKPEEEVAQKKKISQKKLKKQKLMARE</sequence>
<gene>
    <name type="primary">RPL17</name>
</gene>
<protein>
    <recommendedName>
        <fullName>Large ribosomal subunit protein uL22</fullName>
    </recommendedName>
    <alternativeName>
        <fullName>60S ribosomal protein L17</fullName>
    </alternativeName>
</protein>
<evidence type="ECO:0000250" key="1">
    <source>
        <dbReference type="UniProtKB" id="P18621"/>
    </source>
</evidence>
<evidence type="ECO:0000256" key="2">
    <source>
        <dbReference type="SAM" id="MobiDB-lite"/>
    </source>
</evidence>
<evidence type="ECO:0000269" key="3">
    <source>
    </source>
</evidence>
<evidence type="ECO:0000269" key="4">
    <source>
    </source>
</evidence>
<evidence type="ECO:0000269" key="5">
    <source>
    </source>
</evidence>
<evidence type="ECO:0000269" key="6">
    <source>
    </source>
</evidence>
<evidence type="ECO:0000269" key="7">
    <source>
    </source>
</evidence>
<evidence type="ECO:0000269" key="8">
    <source>
    </source>
</evidence>
<evidence type="ECO:0000269" key="9">
    <source>
    </source>
</evidence>
<evidence type="ECO:0000269" key="10">
    <source>
    </source>
</evidence>
<evidence type="ECO:0000269" key="11">
    <source>
    </source>
</evidence>
<evidence type="ECO:0000269" key="12">
    <source>
    </source>
</evidence>
<evidence type="ECO:0000305" key="13"/>
<evidence type="ECO:0007744" key="14">
    <source>
        <dbReference type="PDB" id="5LZS"/>
    </source>
</evidence>
<evidence type="ECO:0007744" key="15">
    <source>
        <dbReference type="PDB" id="5LZT"/>
    </source>
</evidence>
<evidence type="ECO:0007744" key="16">
    <source>
        <dbReference type="PDB" id="6D90"/>
    </source>
</evidence>
<evidence type="ECO:0007744" key="17">
    <source>
        <dbReference type="PDB" id="6D9J"/>
    </source>
</evidence>
<evidence type="ECO:0007744" key="18">
    <source>
        <dbReference type="PDB" id="6HCF"/>
    </source>
</evidence>
<evidence type="ECO:0007744" key="19">
    <source>
        <dbReference type="PDB" id="6HCJ"/>
    </source>
</evidence>
<evidence type="ECO:0007744" key="20">
    <source>
        <dbReference type="PDB" id="6MTB"/>
    </source>
</evidence>
<evidence type="ECO:0007744" key="21">
    <source>
        <dbReference type="PDB" id="6MTC"/>
    </source>
</evidence>
<evidence type="ECO:0007744" key="22">
    <source>
        <dbReference type="PDB" id="6P5I"/>
    </source>
</evidence>
<evidence type="ECO:0007744" key="23">
    <source>
        <dbReference type="PDB" id="6P5J"/>
    </source>
</evidence>
<evidence type="ECO:0007744" key="24">
    <source>
        <dbReference type="PDB" id="6R5Q"/>
    </source>
</evidence>
<evidence type="ECO:0007744" key="25">
    <source>
        <dbReference type="PDB" id="6R6G"/>
    </source>
</evidence>
<evidence type="ECO:0007744" key="26">
    <source>
        <dbReference type="PDB" id="6SGC"/>
    </source>
</evidence>
<evidence type="ECO:0007744" key="27">
    <source>
        <dbReference type="PDB" id="6ZVK"/>
    </source>
</evidence>
<evidence type="ECO:0007744" key="28">
    <source>
        <dbReference type="PDB" id="7A01"/>
    </source>
</evidence>
<evidence type="ECO:0007744" key="29">
    <source>
        <dbReference type="PDB" id="7OYD"/>
    </source>
</evidence>
<evidence type="ECO:0007744" key="30">
    <source>
        <dbReference type="PDB" id="7UCJ"/>
    </source>
</evidence>
<evidence type="ECO:0007744" key="31">
    <source>
        <dbReference type="PDB" id="7UCK"/>
    </source>
</evidence>
<dbReference type="EMBL" id="AAGW02010618">
    <property type="status" value="NOT_ANNOTATED_CDS"/>
    <property type="molecule type" value="Genomic_DNA"/>
</dbReference>
<dbReference type="RefSeq" id="XP_002713574.1">
    <property type="nucleotide sequence ID" value="XM_002713528.3"/>
</dbReference>
<dbReference type="RefSeq" id="XP_002713575.1">
    <property type="nucleotide sequence ID" value="XM_002713529.3"/>
</dbReference>
<dbReference type="RefSeq" id="XP_017206167.1">
    <property type="nucleotide sequence ID" value="XM_017350678.1"/>
</dbReference>
<dbReference type="PDB" id="5LZS">
    <property type="method" value="EM"/>
    <property type="resolution" value="3.31 A"/>
    <property type="chains" value="P=1-184"/>
</dbReference>
<dbReference type="PDB" id="5LZT">
    <property type="method" value="EM"/>
    <property type="resolution" value="3.65 A"/>
    <property type="chains" value="P=1-184"/>
</dbReference>
<dbReference type="PDB" id="5LZU">
    <property type="method" value="EM"/>
    <property type="resolution" value="3.75 A"/>
    <property type="chains" value="P=1-184"/>
</dbReference>
<dbReference type="PDB" id="5LZV">
    <property type="method" value="EM"/>
    <property type="resolution" value="3.35 A"/>
    <property type="chains" value="P=1-184"/>
</dbReference>
<dbReference type="PDB" id="5LZW">
    <property type="method" value="EM"/>
    <property type="resolution" value="3.53 A"/>
    <property type="chains" value="P=1-184"/>
</dbReference>
<dbReference type="PDB" id="5LZX">
    <property type="method" value="EM"/>
    <property type="resolution" value="3.67 A"/>
    <property type="chains" value="P=1-184"/>
</dbReference>
<dbReference type="PDB" id="5LZY">
    <property type="method" value="EM"/>
    <property type="resolution" value="3.99 A"/>
    <property type="chains" value="P=1-184"/>
</dbReference>
<dbReference type="PDB" id="5LZZ">
    <property type="method" value="EM"/>
    <property type="resolution" value="3.47 A"/>
    <property type="chains" value="P=1-184"/>
</dbReference>
<dbReference type="PDB" id="6D90">
    <property type="method" value="EM"/>
    <property type="resolution" value="3.20 A"/>
    <property type="chains" value="P=1-184"/>
</dbReference>
<dbReference type="PDB" id="6D9J">
    <property type="method" value="EM"/>
    <property type="resolution" value="3.20 A"/>
    <property type="chains" value="P=1-184"/>
</dbReference>
<dbReference type="PDB" id="6FTG">
    <property type="method" value="EM"/>
    <property type="resolution" value="9.10 A"/>
    <property type="chains" value="P=2-183"/>
</dbReference>
<dbReference type="PDB" id="6FTI">
    <property type="method" value="EM"/>
    <property type="resolution" value="4.20 A"/>
    <property type="chains" value="P=2-183"/>
</dbReference>
<dbReference type="PDB" id="6FTJ">
    <property type="method" value="EM"/>
    <property type="resolution" value="4.70 A"/>
    <property type="chains" value="P=2-183"/>
</dbReference>
<dbReference type="PDB" id="6HCF">
    <property type="method" value="EM"/>
    <property type="resolution" value="3.90 A"/>
    <property type="chains" value="P3=1-184"/>
</dbReference>
<dbReference type="PDB" id="6HCJ">
    <property type="method" value="EM"/>
    <property type="resolution" value="3.80 A"/>
    <property type="chains" value="P3=1-184"/>
</dbReference>
<dbReference type="PDB" id="6HCM">
    <property type="method" value="EM"/>
    <property type="resolution" value="6.80 A"/>
    <property type="chains" value="P3=1-184"/>
</dbReference>
<dbReference type="PDB" id="6HCQ">
    <property type="method" value="EM"/>
    <property type="resolution" value="6.50 A"/>
    <property type="chains" value="P3=1-184"/>
</dbReference>
<dbReference type="PDB" id="6MTB">
    <property type="method" value="EM"/>
    <property type="resolution" value="3.60 A"/>
    <property type="chains" value="P=2-154"/>
</dbReference>
<dbReference type="PDB" id="6MTC">
    <property type="method" value="EM"/>
    <property type="resolution" value="3.40 A"/>
    <property type="chains" value="P=2-154"/>
</dbReference>
<dbReference type="PDB" id="6MTD">
    <property type="method" value="EM"/>
    <property type="resolution" value="3.30 A"/>
    <property type="chains" value="P=2-154"/>
</dbReference>
<dbReference type="PDB" id="6MTE">
    <property type="method" value="EM"/>
    <property type="resolution" value="3.40 A"/>
    <property type="chains" value="P=2-154"/>
</dbReference>
<dbReference type="PDB" id="6P5I">
    <property type="method" value="EM"/>
    <property type="resolution" value="3.10 A"/>
    <property type="chains" value="AP=1-184"/>
</dbReference>
<dbReference type="PDB" id="6P5J">
    <property type="method" value="EM"/>
    <property type="resolution" value="3.10 A"/>
    <property type="chains" value="AP=1-184"/>
</dbReference>
<dbReference type="PDB" id="6P5K">
    <property type="method" value="EM"/>
    <property type="resolution" value="3.10 A"/>
    <property type="chains" value="AP=1-184"/>
</dbReference>
<dbReference type="PDB" id="6P5N">
    <property type="method" value="EM"/>
    <property type="resolution" value="3.20 A"/>
    <property type="chains" value="AP=1-184"/>
</dbReference>
<dbReference type="PDB" id="6R5Q">
    <property type="method" value="EM"/>
    <property type="resolution" value="3.00 A"/>
    <property type="chains" value="P=2-154"/>
</dbReference>
<dbReference type="PDB" id="6R6G">
    <property type="method" value="EM"/>
    <property type="resolution" value="3.70 A"/>
    <property type="chains" value="P=2-154"/>
</dbReference>
<dbReference type="PDB" id="6R6P">
    <property type="method" value="EM"/>
    <property type="resolution" value="3.10 A"/>
    <property type="chains" value="P=2-154"/>
</dbReference>
<dbReference type="PDB" id="6R7Q">
    <property type="method" value="EM"/>
    <property type="resolution" value="3.90 A"/>
    <property type="chains" value="P=2-154"/>
</dbReference>
<dbReference type="PDB" id="6SGC">
    <property type="method" value="EM"/>
    <property type="resolution" value="2.80 A"/>
    <property type="chains" value="P2=1-184"/>
</dbReference>
<dbReference type="PDB" id="6T59">
    <property type="method" value="EM"/>
    <property type="resolution" value="3.11 A"/>
    <property type="chains" value="P3=1-184"/>
</dbReference>
<dbReference type="PDB" id="6ZVK">
    <property type="method" value="EM"/>
    <property type="resolution" value="3.49 A"/>
    <property type="chains" value="H2=2-184"/>
</dbReference>
<dbReference type="PDB" id="7A01">
    <property type="method" value="EM"/>
    <property type="resolution" value="3.60 A"/>
    <property type="chains" value="H2=2-184"/>
</dbReference>
<dbReference type="PDB" id="7MDZ">
    <property type="method" value="EM"/>
    <property type="resolution" value="3.20 A"/>
    <property type="chains" value="P=1-184"/>
</dbReference>
<dbReference type="PDB" id="7NFX">
    <property type="method" value="EM"/>
    <property type="resolution" value="3.20 A"/>
    <property type="chains" value="P=2-183"/>
</dbReference>
<dbReference type="PDB" id="7O7Y">
    <property type="method" value="EM"/>
    <property type="resolution" value="2.20 A"/>
    <property type="chains" value="BP=1-184"/>
</dbReference>
<dbReference type="PDB" id="7O7Z">
    <property type="method" value="EM"/>
    <property type="resolution" value="2.40 A"/>
    <property type="chains" value="BP=1-184"/>
</dbReference>
<dbReference type="PDB" id="7O80">
    <property type="method" value="EM"/>
    <property type="resolution" value="2.90 A"/>
    <property type="chains" value="BP=1-184"/>
</dbReference>
<dbReference type="PDB" id="7O81">
    <property type="method" value="EM"/>
    <property type="resolution" value="3.10 A"/>
    <property type="chains" value="BP=1-184"/>
</dbReference>
<dbReference type="PDB" id="7OBR">
    <property type="method" value="EM"/>
    <property type="resolution" value="2.80 A"/>
    <property type="chains" value="P=2-183"/>
</dbReference>
<dbReference type="PDB" id="7OYD">
    <property type="method" value="EM"/>
    <property type="resolution" value="2.30 A"/>
    <property type="chains" value="P=1-184"/>
</dbReference>
<dbReference type="PDB" id="7TM3">
    <property type="method" value="EM"/>
    <property type="resolution" value="3.25 A"/>
    <property type="chains" value="P=1-184"/>
</dbReference>
<dbReference type="PDB" id="7TOQ">
    <property type="method" value="EM"/>
    <property type="resolution" value="3.10 A"/>
    <property type="chains" value="AL17=2-154"/>
</dbReference>
<dbReference type="PDB" id="7TOR">
    <property type="method" value="EM"/>
    <property type="resolution" value="2.90 A"/>
    <property type="chains" value="AL17=2-154"/>
</dbReference>
<dbReference type="PDB" id="7TUT">
    <property type="method" value="EM"/>
    <property type="resolution" value="3.88 A"/>
    <property type="chains" value="P=1-184"/>
</dbReference>
<dbReference type="PDB" id="7UCJ">
    <property type="method" value="EM"/>
    <property type="resolution" value="3.10 A"/>
    <property type="chains" value="P=2-154"/>
</dbReference>
<dbReference type="PDB" id="7UCK">
    <property type="method" value="EM"/>
    <property type="resolution" value="2.80 A"/>
    <property type="chains" value="P=2-154"/>
</dbReference>
<dbReference type="PDB" id="8B5L">
    <property type="method" value="EM"/>
    <property type="resolution" value="2.86 A"/>
    <property type="chains" value="P=2-154"/>
</dbReference>
<dbReference type="PDB" id="8B6C">
    <property type="method" value="EM"/>
    <property type="resolution" value="2.79 A"/>
    <property type="chains" value="P=2-154"/>
</dbReference>
<dbReference type="PDB" id="8BHF">
    <property type="method" value="EM"/>
    <property type="resolution" value="3.10 A"/>
    <property type="chains" value="C1=2-154"/>
</dbReference>
<dbReference type="PDB" id="8BTK">
    <property type="method" value="EM"/>
    <property type="resolution" value="3.50 A"/>
    <property type="chains" value="BP=1-184"/>
</dbReference>
<dbReference type="PDB" id="8P2K">
    <property type="method" value="EM"/>
    <property type="resolution" value="2.90 A"/>
    <property type="chains" value="BP=1-184"/>
</dbReference>
<dbReference type="PDB" id="8RJB">
    <property type="method" value="EM"/>
    <property type="resolution" value="2.69 A"/>
    <property type="chains" value="P=1-184"/>
</dbReference>
<dbReference type="PDB" id="8RJC">
    <property type="method" value="EM"/>
    <property type="resolution" value="2.90 A"/>
    <property type="chains" value="P=1-184"/>
</dbReference>
<dbReference type="PDB" id="8RJD">
    <property type="method" value="EM"/>
    <property type="resolution" value="2.79 A"/>
    <property type="chains" value="P=1-184"/>
</dbReference>
<dbReference type="PDB" id="8SCB">
    <property type="method" value="EM"/>
    <property type="resolution" value="2.50 A"/>
    <property type="chains" value="P=1-184"/>
</dbReference>
<dbReference type="PDB" id="8VFT">
    <property type="method" value="EM"/>
    <property type="resolution" value="3.30 A"/>
    <property type="chains" value="P=1-184"/>
</dbReference>
<dbReference type="PDB" id="9BDL">
    <property type="method" value="EM"/>
    <property type="resolution" value="2.80 A"/>
    <property type="chains" value="AL17=2-154"/>
</dbReference>
<dbReference type="PDB" id="9BDN">
    <property type="method" value="EM"/>
    <property type="resolution" value="3.10 A"/>
    <property type="chains" value="AL17=2-154"/>
</dbReference>
<dbReference type="PDB" id="9BDP">
    <property type="method" value="EM"/>
    <property type="resolution" value="3.70 A"/>
    <property type="chains" value="AL17=2-154"/>
</dbReference>
<dbReference type="PDB" id="9F1B">
    <property type="method" value="EM"/>
    <property type="resolution" value="3.01 A"/>
    <property type="chains" value="BP=1-184"/>
</dbReference>
<dbReference type="PDB" id="9F1C">
    <property type="method" value="EM"/>
    <property type="resolution" value="3.78 A"/>
    <property type="chains" value="BP=1-184"/>
</dbReference>
<dbReference type="PDB" id="9F1D">
    <property type="method" value="EM"/>
    <property type="resolution" value="3.26 A"/>
    <property type="chains" value="BP=1-184"/>
</dbReference>
<dbReference type="PDBsum" id="5LZS"/>
<dbReference type="PDBsum" id="5LZT"/>
<dbReference type="PDBsum" id="5LZU"/>
<dbReference type="PDBsum" id="5LZV"/>
<dbReference type="PDBsum" id="5LZW"/>
<dbReference type="PDBsum" id="5LZX"/>
<dbReference type="PDBsum" id="5LZY"/>
<dbReference type="PDBsum" id="5LZZ"/>
<dbReference type="PDBsum" id="6D90"/>
<dbReference type="PDBsum" id="6D9J"/>
<dbReference type="PDBsum" id="6FTG"/>
<dbReference type="PDBsum" id="6FTI"/>
<dbReference type="PDBsum" id="6FTJ"/>
<dbReference type="PDBsum" id="6HCF"/>
<dbReference type="PDBsum" id="6HCJ"/>
<dbReference type="PDBsum" id="6HCM"/>
<dbReference type="PDBsum" id="6HCQ"/>
<dbReference type="PDBsum" id="6MTB"/>
<dbReference type="PDBsum" id="6MTC"/>
<dbReference type="PDBsum" id="6MTD"/>
<dbReference type="PDBsum" id="6MTE"/>
<dbReference type="PDBsum" id="6P5I"/>
<dbReference type="PDBsum" id="6P5J"/>
<dbReference type="PDBsum" id="6P5K"/>
<dbReference type="PDBsum" id="6P5N"/>
<dbReference type="PDBsum" id="6R5Q"/>
<dbReference type="PDBsum" id="6R6G"/>
<dbReference type="PDBsum" id="6R6P"/>
<dbReference type="PDBsum" id="6R7Q"/>
<dbReference type="PDBsum" id="6SGC"/>
<dbReference type="PDBsum" id="6T59"/>
<dbReference type="PDBsum" id="6ZVK"/>
<dbReference type="PDBsum" id="7A01"/>
<dbReference type="PDBsum" id="7MDZ"/>
<dbReference type="PDBsum" id="7NFX"/>
<dbReference type="PDBsum" id="7O7Y"/>
<dbReference type="PDBsum" id="7O7Z"/>
<dbReference type="PDBsum" id="7O80"/>
<dbReference type="PDBsum" id="7O81"/>
<dbReference type="PDBsum" id="7OBR"/>
<dbReference type="PDBsum" id="7OYD"/>
<dbReference type="PDBsum" id="7TM3"/>
<dbReference type="PDBsum" id="7TOQ"/>
<dbReference type="PDBsum" id="7TOR"/>
<dbReference type="PDBsum" id="7TUT"/>
<dbReference type="PDBsum" id="7UCJ"/>
<dbReference type="PDBsum" id="7UCK"/>
<dbReference type="PDBsum" id="8B5L"/>
<dbReference type="PDBsum" id="8B6C"/>
<dbReference type="PDBsum" id="8BHF"/>
<dbReference type="PDBsum" id="8BTK"/>
<dbReference type="PDBsum" id="8P2K"/>
<dbReference type="PDBsum" id="8RJB"/>
<dbReference type="PDBsum" id="8RJC"/>
<dbReference type="PDBsum" id="8RJD"/>
<dbReference type="PDBsum" id="8SCB"/>
<dbReference type="PDBsum" id="8VFT"/>
<dbReference type="PDBsum" id="9BDL"/>
<dbReference type="PDBsum" id="9BDN"/>
<dbReference type="PDBsum" id="9BDP"/>
<dbReference type="PDBsum" id="9F1B"/>
<dbReference type="PDBsum" id="9F1C"/>
<dbReference type="PDBsum" id="9F1D"/>
<dbReference type="EMDB" id="EMD-0099"/>
<dbReference type="EMDB" id="EMD-0100"/>
<dbReference type="EMDB" id="EMD-0192"/>
<dbReference type="EMDB" id="EMD-0194"/>
<dbReference type="EMDB" id="EMD-0195"/>
<dbReference type="EMDB" id="EMD-0197"/>
<dbReference type="EMDB" id="EMD-10181"/>
<dbReference type="EMDB" id="EMD-10380"/>
<dbReference type="EMDB" id="EMD-11459"/>
<dbReference type="EMDB" id="EMD-11590"/>
<dbReference type="EMDB" id="EMD-12303"/>
<dbReference type="EMDB" id="EMD-12633"/>
<dbReference type="EMDB" id="EMD-12756"/>
<dbReference type="EMDB" id="EMD-12757"/>
<dbReference type="EMDB" id="EMD-12758"/>
<dbReference type="EMDB" id="EMD-12759"/>
<dbReference type="EMDB" id="EMD-12801"/>
<dbReference type="EMDB" id="EMD-13114"/>
<dbReference type="EMDB" id="EMD-15860"/>
<dbReference type="EMDB" id="EMD-15863"/>
<dbReference type="EMDB" id="EMD-16052"/>
<dbReference type="EMDB" id="EMD-16232"/>
<dbReference type="EMDB" id="EMD-17367"/>
<dbReference type="EMDB" id="EMD-19195"/>
<dbReference type="EMDB" id="EMD-19197"/>
<dbReference type="EMDB" id="EMD-19198"/>
<dbReference type="EMDB" id="EMD-20255"/>
<dbReference type="EMDB" id="EMD-20256"/>
<dbReference type="EMDB" id="EMD-20257"/>
<dbReference type="EMDB" id="EMD-20258"/>
<dbReference type="EMDB" id="EMD-23785"/>
<dbReference type="EMDB" id="EMD-25994"/>
<dbReference type="EMDB" id="EMD-26035"/>
<dbReference type="EMDB" id="EMD-26036"/>
<dbReference type="EMDB" id="EMD-26133"/>
<dbReference type="EMDB" id="EMD-26444"/>
<dbReference type="EMDB" id="EMD-26445"/>
<dbReference type="EMDB" id="EMD-40344"/>
<dbReference type="EMDB" id="EMD-4130"/>
<dbReference type="EMDB" id="EMD-4131"/>
<dbReference type="EMDB" id="EMD-4132"/>
<dbReference type="EMDB" id="EMD-4133"/>
<dbReference type="EMDB" id="EMD-4134"/>
<dbReference type="EMDB" id="EMD-4135"/>
<dbReference type="EMDB" id="EMD-4136"/>
<dbReference type="EMDB" id="EMD-4137"/>
<dbReference type="EMDB" id="EMD-4300"/>
<dbReference type="EMDB" id="EMD-4315"/>
<dbReference type="EMDB" id="EMD-4316"/>
<dbReference type="EMDB" id="EMD-4317"/>
<dbReference type="EMDB" id="EMD-43189"/>
<dbReference type="EMDB" id="EMD-44461"/>
<dbReference type="EMDB" id="EMD-44463"/>
<dbReference type="EMDB" id="EMD-44464"/>
<dbReference type="EMDB" id="EMD-4729"/>
<dbReference type="EMDB" id="EMD-4735"/>
<dbReference type="EMDB" id="EMD-4737"/>
<dbReference type="EMDB" id="EMD-4745"/>
<dbReference type="EMDB" id="EMD-50124"/>
<dbReference type="EMDB" id="EMD-50125"/>
<dbReference type="EMDB" id="EMD-50126"/>
<dbReference type="EMDB" id="EMD-7834"/>
<dbReference type="EMDB" id="EMD-9237"/>
<dbReference type="EMDB" id="EMD-9239"/>
<dbReference type="EMDB" id="EMD-9240"/>
<dbReference type="EMDB" id="EMD-9242"/>
<dbReference type="SMR" id="G1SCJ6"/>
<dbReference type="FunCoup" id="G1SCJ6">
    <property type="interactions" value="1106"/>
</dbReference>
<dbReference type="IntAct" id="G1SCJ6">
    <property type="interactions" value="1"/>
</dbReference>
<dbReference type="STRING" id="9986.ENSOCUP00000000071"/>
<dbReference type="PaxDb" id="9986-ENSOCUP00000021175"/>
<dbReference type="GeneID" id="108175352"/>
<dbReference type="KEGG" id="ocu:100339314"/>
<dbReference type="KEGG" id="ocu:108175352"/>
<dbReference type="CTD" id="6139"/>
<dbReference type="eggNOG" id="KOG3353">
    <property type="taxonomic scope" value="Eukaryota"/>
</dbReference>
<dbReference type="HOGENOM" id="CLU_083987_0_1_1"/>
<dbReference type="InParanoid" id="G1SCJ6"/>
<dbReference type="TreeFam" id="TF300042"/>
<dbReference type="Proteomes" id="UP000001811">
    <property type="component" value="Chromosome 2"/>
</dbReference>
<dbReference type="Proteomes" id="UP000001811">
    <property type="component" value="Chromosome 9"/>
</dbReference>
<dbReference type="Bgee" id="ENSOCUG00000022888">
    <property type="expression patterns" value="Expressed in left lung and 16 other cell types or tissues"/>
</dbReference>
<dbReference type="GO" id="GO:0022625">
    <property type="term" value="C:cytosolic large ribosomal subunit"/>
    <property type="evidence" value="ECO:0007669"/>
    <property type="project" value="TreeGrafter"/>
</dbReference>
<dbReference type="GO" id="GO:0003735">
    <property type="term" value="F:structural constituent of ribosome"/>
    <property type="evidence" value="ECO:0007669"/>
    <property type="project" value="InterPro"/>
</dbReference>
<dbReference type="GO" id="GO:0002181">
    <property type="term" value="P:cytoplasmic translation"/>
    <property type="evidence" value="ECO:0007669"/>
    <property type="project" value="TreeGrafter"/>
</dbReference>
<dbReference type="CDD" id="cd00336">
    <property type="entry name" value="Ribosomal_L22"/>
    <property type="match status" value="1"/>
</dbReference>
<dbReference type="FunFam" id="3.90.470.10:FF:000003">
    <property type="entry name" value="60S ribosomal protein L17"/>
    <property type="match status" value="1"/>
</dbReference>
<dbReference type="Gene3D" id="3.90.470.10">
    <property type="entry name" value="Ribosomal protein L22/L17"/>
    <property type="match status" value="1"/>
</dbReference>
<dbReference type="HAMAP" id="MF_01331_A">
    <property type="entry name" value="Ribosomal_uL22_A"/>
    <property type="match status" value="1"/>
</dbReference>
<dbReference type="InterPro" id="IPR001063">
    <property type="entry name" value="Ribosomal_uL22"/>
</dbReference>
<dbReference type="InterPro" id="IPR018260">
    <property type="entry name" value="Ribosomal_uL22_CS"/>
</dbReference>
<dbReference type="InterPro" id="IPR005721">
    <property type="entry name" value="Ribosomal_uL22_euk/arc"/>
</dbReference>
<dbReference type="InterPro" id="IPR036394">
    <property type="entry name" value="Ribosomal_uL22_sf"/>
</dbReference>
<dbReference type="NCBIfam" id="NF003260">
    <property type="entry name" value="PRK04223.1"/>
    <property type="match status" value="1"/>
</dbReference>
<dbReference type="NCBIfam" id="TIGR01038">
    <property type="entry name" value="uL22_arch_euk"/>
    <property type="match status" value="1"/>
</dbReference>
<dbReference type="PANTHER" id="PTHR11593">
    <property type="entry name" value="60S RIBOSOMAL PROTEIN L17"/>
    <property type="match status" value="1"/>
</dbReference>
<dbReference type="PANTHER" id="PTHR11593:SF10">
    <property type="entry name" value="60S RIBOSOMAL PROTEIN L17"/>
    <property type="match status" value="1"/>
</dbReference>
<dbReference type="Pfam" id="PF00237">
    <property type="entry name" value="Ribosomal_L22"/>
    <property type="match status" value="1"/>
</dbReference>
<dbReference type="SUPFAM" id="SSF54843">
    <property type="entry name" value="Ribosomal protein L22"/>
    <property type="match status" value="1"/>
</dbReference>
<dbReference type="PROSITE" id="PS00464">
    <property type="entry name" value="RIBOSOMAL_L22"/>
    <property type="match status" value="1"/>
</dbReference>
<proteinExistence type="evidence at protein level"/>
<organism>
    <name type="scientific">Oryctolagus cuniculus</name>
    <name type="common">Rabbit</name>
    <dbReference type="NCBI Taxonomy" id="9986"/>
    <lineage>
        <taxon>Eukaryota</taxon>
        <taxon>Metazoa</taxon>
        <taxon>Chordata</taxon>
        <taxon>Craniata</taxon>
        <taxon>Vertebrata</taxon>
        <taxon>Euteleostomi</taxon>
        <taxon>Mammalia</taxon>
        <taxon>Eutheria</taxon>
        <taxon>Euarchontoglires</taxon>
        <taxon>Glires</taxon>
        <taxon>Lagomorpha</taxon>
        <taxon>Leporidae</taxon>
        <taxon>Oryctolagus</taxon>
    </lineage>
</organism>
<name>RL17_RABIT</name>
<comment type="function">
    <text evidence="3">Component of the large ribosomal subunit (PubMed:27863242). The ribosome is a large ribonucleoprotein complex responsible for the synthesis of proteins in the cell (PubMed:27863242).</text>
</comment>
<comment type="subunit">
    <text evidence="3 4 5 6 7 8 9 10 11 12">Component of the large ribosomal subunit.</text>
</comment>
<comment type="subcellular location">
    <subcellularLocation>
        <location evidence="3 4 5 6 7 8 9 10 11 12">Cytoplasm</location>
    </subcellularLocation>
</comment>
<comment type="similarity">
    <text evidence="13">Belongs to the universal ribosomal protein uL22 family.</text>
</comment>